<keyword id="KW-0963">Cytoplasm</keyword>
<keyword id="KW-0342">GTP-binding</keyword>
<keyword id="KW-0436">Ligase</keyword>
<keyword id="KW-0460">Magnesium</keyword>
<keyword id="KW-0479">Metal-binding</keyword>
<keyword id="KW-0547">Nucleotide-binding</keyword>
<keyword id="KW-0658">Purine biosynthesis</keyword>
<keyword id="KW-1185">Reference proteome</keyword>
<organism>
    <name type="scientific">Aquifex aeolicus (strain VF5)</name>
    <dbReference type="NCBI Taxonomy" id="224324"/>
    <lineage>
        <taxon>Bacteria</taxon>
        <taxon>Pseudomonadati</taxon>
        <taxon>Aquificota</taxon>
        <taxon>Aquificia</taxon>
        <taxon>Aquificales</taxon>
        <taxon>Aquificaceae</taxon>
        <taxon>Aquifex</taxon>
    </lineage>
</organism>
<gene>
    <name evidence="1" type="primary">purA</name>
    <name type="ordered locus">aq_1290</name>
</gene>
<proteinExistence type="inferred from homology"/>
<protein>
    <recommendedName>
        <fullName evidence="1">Adenylosuccinate synthetase</fullName>
        <shortName evidence="1">AMPSase</shortName>
        <shortName evidence="1">AdSS</shortName>
        <ecNumber evidence="1">6.3.4.4</ecNumber>
    </recommendedName>
    <alternativeName>
        <fullName evidence="1">IMP--aspartate ligase</fullName>
    </alternativeName>
</protein>
<feature type="chain" id="PRO_0000095142" description="Adenylosuccinate synthetase">
    <location>
        <begin position="1"/>
        <end position="432"/>
    </location>
</feature>
<feature type="active site" description="Proton acceptor" evidence="1">
    <location>
        <position position="13"/>
    </location>
</feature>
<feature type="active site" description="Proton donor" evidence="1">
    <location>
        <position position="41"/>
    </location>
</feature>
<feature type="binding site" evidence="1">
    <location>
        <begin position="12"/>
        <end position="18"/>
    </location>
    <ligand>
        <name>GTP</name>
        <dbReference type="ChEBI" id="CHEBI:37565"/>
    </ligand>
</feature>
<feature type="binding site" description="in other chain" evidence="1">
    <location>
        <begin position="13"/>
        <end position="16"/>
    </location>
    <ligand>
        <name>IMP</name>
        <dbReference type="ChEBI" id="CHEBI:58053"/>
        <note>ligand shared between dimeric partners</note>
    </ligand>
</feature>
<feature type="binding site" evidence="1">
    <location>
        <position position="13"/>
    </location>
    <ligand>
        <name>Mg(2+)</name>
        <dbReference type="ChEBI" id="CHEBI:18420"/>
    </ligand>
</feature>
<feature type="binding site" description="in other chain" evidence="1">
    <location>
        <begin position="38"/>
        <end position="41"/>
    </location>
    <ligand>
        <name>IMP</name>
        <dbReference type="ChEBI" id="CHEBI:58053"/>
        <note>ligand shared between dimeric partners</note>
    </ligand>
</feature>
<feature type="binding site" evidence="1">
    <location>
        <begin position="40"/>
        <end position="42"/>
    </location>
    <ligand>
        <name>GTP</name>
        <dbReference type="ChEBI" id="CHEBI:37565"/>
    </ligand>
</feature>
<feature type="binding site" evidence="1">
    <location>
        <position position="40"/>
    </location>
    <ligand>
        <name>Mg(2+)</name>
        <dbReference type="ChEBI" id="CHEBI:18420"/>
    </ligand>
</feature>
<feature type="binding site" description="in other chain" evidence="1">
    <location>
        <position position="126"/>
    </location>
    <ligand>
        <name>IMP</name>
        <dbReference type="ChEBI" id="CHEBI:58053"/>
        <note>ligand shared between dimeric partners</note>
    </ligand>
</feature>
<feature type="binding site" evidence="1">
    <location>
        <position position="140"/>
    </location>
    <ligand>
        <name>IMP</name>
        <dbReference type="ChEBI" id="CHEBI:58053"/>
        <note>ligand shared between dimeric partners</note>
    </ligand>
</feature>
<feature type="binding site" description="in other chain" evidence="1">
    <location>
        <position position="219"/>
    </location>
    <ligand>
        <name>IMP</name>
        <dbReference type="ChEBI" id="CHEBI:58053"/>
        <note>ligand shared between dimeric partners</note>
    </ligand>
</feature>
<feature type="binding site" description="in other chain" evidence="1">
    <location>
        <position position="234"/>
    </location>
    <ligand>
        <name>IMP</name>
        <dbReference type="ChEBI" id="CHEBI:58053"/>
        <note>ligand shared between dimeric partners</note>
    </ligand>
</feature>
<feature type="binding site" evidence="1">
    <location>
        <begin position="296"/>
        <end position="302"/>
    </location>
    <ligand>
        <name>substrate</name>
    </ligand>
</feature>
<feature type="binding site" description="in other chain" evidence="1">
    <location>
        <position position="300"/>
    </location>
    <ligand>
        <name>IMP</name>
        <dbReference type="ChEBI" id="CHEBI:58053"/>
        <note>ligand shared between dimeric partners</note>
    </ligand>
</feature>
<feature type="binding site" evidence="1">
    <location>
        <position position="302"/>
    </location>
    <ligand>
        <name>GTP</name>
        <dbReference type="ChEBI" id="CHEBI:37565"/>
    </ligand>
</feature>
<feature type="binding site" evidence="1">
    <location>
        <begin position="328"/>
        <end position="330"/>
    </location>
    <ligand>
        <name>GTP</name>
        <dbReference type="ChEBI" id="CHEBI:37565"/>
    </ligand>
</feature>
<feature type="binding site" evidence="1">
    <location>
        <begin position="410"/>
        <end position="412"/>
    </location>
    <ligand>
        <name>GTP</name>
        <dbReference type="ChEBI" id="CHEBI:37565"/>
    </ligand>
</feature>
<evidence type="ECO:0000255" key="1">
    <source>
        <dbReference type="HAMAP-Rule" id="MF_00011"/>
    </source>
</evidence>
<dbReference type="EC" id="6.3.4.4" evidence="1"/>
<dbReference type="EMBL" id="AE000657">
    <property type="protein sequence ID" value="AAC07286.1"/>
    <property type="molecule type" value="Genomic_DNA"/>
</dbReference>
<dbReference type="PIR" id="F70411">
    <property type="entry name" value="F70411"/>
</dbReference>
<dbReference type="RefSeq" id="NP_213885.1">
    <property type="nucleotide sequence ID" value="NC_000918.1"/>
</dbReference>
<dbReference type="RefSeq" id="WP_010880823.1">
    <property type="nucleotide sequence ID" value="NC_000918.1"/>
</dbReference>
<dbReference type="SMR" id="O67321"/>
<dbReference type="FunCoup" id="O67321">
    <property type="interactions" value="476"/>
</dbReference>
<dbReference type="STRING" id="224324.aq_1290"/>
<dbReference type="EnsemblBacteria" id="AAC07286">
    <property type="protein sequence ID" value="AAC07286"/>
    <property type="gene ID" value="aq_1290"/>
</dbReference>
<dbReference type="KEGG" id="aae:aq_1290"/>
<dbReference type="PATRIC" id="fig|224324.8.peg.1009"/>
<dbReference type="eggNOG" id="COG0104">
    <property type="taxonomic scope" value="Bacteria"/>
</dbReference>
<dbReference type="HOGENOM" id="CLU_029848_0_0_0"/>
<dbReference type="InParanoid" id="O67321"/>
<dbReference type="OrthoDB" id="9807553at2"/>
<dbReference type="UniPathway" id="UPA00075">
    <property type="reaction ID" value="UER00335"/>
</dbReference>
<dbReference type="Proteomes" id="UP000000798">
    <property type="component" value="Chromosome"/>
</dbReference>
<dbReference type="GO" id="GO:0005737">
    <property type="term" value="C:cytoplasm"/>
    <property type="evidence" value="ECO:0000318"/>
    <property type="project" value="GO_Central"/>
</dbReference>
<dbReference type="GO" id="GO:0004019">
    <property type="term" value="F:adenylosuccinate synthase activity"/>
    <property type="evidence" value="ECO:0000318"/>
    <property type="project" value="GO_Central"/>
</dbReference>
<dbReference type="GO" id="GO:0005525">
    <property type="term" value="F:GTP binding"/>
    <property type="evidence" value="ECO:0007669"/>
    <property type="project" value="UniProtKB-UniRule"/>
</dbReference>
<dbReference type="GO" id="GO:0000287">
    <property type="term" value="F:magnesium ion binding"/>
    <property type="evidence" value="ECO:0007669"/>
    <property type="project" value="UniProtKB-UniRule"/>
</dbReference>
<dbReference type="GO" id="GO:0044208">
    <property type="term" value="P:'de novo' AMP biosynthetic process"/>
    <property type="evidence" value="ECO:0000318"/>
    <property type="project" value="GO_Central"/>
</dbReference>
<dbReference type="GO" id="GO:0046040">
    <property type="term" value="P:IMP metabolic process"/>
    <property type="evidence" value="ECO:0000318"/>
    <property type="project" value="GO_Central"/>
</dbReference>
<dbReference type="CDD" id="cd03108">
    <property type="entry name" value="AdSS"/>
    <property type="match status" value="1"/>
</dbReference>
<dbReference type="FunFam" id="1.10.300.10:FF:000001">
    <property type="entry name" value="Adenylosuccinate synthetase"/>
    <property type="match status" value="1"/>
</dbReference>
<dbReference type="FunFam" id="3.90.170.10:FF:000001">
    <property type="entry name" value="Adenylosuccinate synthetase"/>
    <property type="match status" value="1"/>
</dbReference>
<dbReference type="Gene3D" id="3.40.440.10">
    <property type="entry name" value="Adenylosuccinate Synthetase, subunit A, domain 1"/>
    <property type="match status" value="1"/>
</dbReference>
<dbReference type="Gene3D" id="1.10.300.10">
    <property type="entry name" value="Adenylosuccinate Synthetase, subunit A, domain 2"/>
    <property type="match status" value="1"/>
</dbReference>
<dbReference type="Gene3D" id="3.90.170.10">
    <property type="entry name" value="Adenylosuccinate Synthetase, subunit A, domain 3"/>
    <property type="match status" value="1"/>
</dbReference>
<dbReference type="HAMAP" id="MF_00011">
    <property type="entry name" value="Adenylosucc_synth"/>
    <property type="match status" value="1"/>
</dbReference>
<dbReference type="InterPro" id="IPR018220">
    <property type="entry name" value="Adenylosuccin_syn_GTP-bd"/>
</dbReference>
<dbReference type="InterPro" id="IPR033128">
    <property type="entry name" value="Adenylosuccin_syn_Lys_AS"/>
</dbReference>
<dbReference type="InterPro" id="IPR042109">
    <property type="entry name" value="Adenylosuccinate_synth_dom1"/>
</dbReference>
<dbReference type="InterPro" id="IPR042110">
    <property type="entry name" value="Adenylosuccinate_synth_dom2"/>
</dbReference>
<dbReference type="InterPro" id="IPR042111">
    <property type="entry name" value="Adenylosuccinate_synth_dom3"/>
</dbReference>
<dbReference type="InterPro" id="IPR001114">
    <property type="entry name" value="Adenylosuccinate_synthetase"/>
</dbReference>
<dbReference type="InterPro" id="IPR027417">
    <property type="entry name" value="P-loop_NTPase"/>
</dbReference>
<dbReference type="NCBIfam" id="NF002223">
    <property type="entry name" value="PRK01117.1"/>
    <property type="match status" value="1"/>
</dbReference>
<dbReference type="NCBIfam" id="NF010355">
    <property type="entry name" value="PRK13783.1"/>
    <property type="match status" value="1"/>
</dbReference>
<dbReference type="NCBIfam" id="TIGR00184">
    <property type="entry name" value="purA"/>
    <property type="match status" value="1"/>
</dbReference>
<dbReference type="PANTHER" id="PTHR11846">
    <property type="entry name" value="ADENYLOSUCCINATE SYNTHETASE"/>
    <property type="match status" value="1"/>
</dbReference>
<dbReference type="PANTHER" id="PTHR11846:SF0">
    <property type="entry name" value="ADENYLOSUCCINATE SYNTHETASE"/>
    <property type="match status" value="1"/>
</dbReference>
<dbReference type="Pfam" id="PF00709">
    <property type="entry name" value="Adenylsucc_synt"/>
    <property type="match status" value="1"/>
</dbReference>
<dbReference type="SMART" id="SM00788">
    <property type="entry name" value="Adenylsucc_synt"/>
    <property type="match status" value="1"/>
</dbReference>
<dbReference type="SUPFAM" id="SSF52540">
    <property type="entry name" value="P-loop containing nucleoside triphosphate hydrolases"/>
    <property type="match status" value="1"/>
</dbReference>
<dbReference type="PROSITE" id="PS01266">
    <property type="entry name" value="ADENYLOSUCCIN_SYN_1"/>
    <property type="match status" value="1"/>
</dbReference>
<dbReference type="PROSITE" id="PS00513">
    <property type="entry name" value="ADENYLOSUCCIN_SYN_2"/>
    <property type="match status" value="1"/>
</dbReference>
<name>PURA_AQUAE</name>
<sequence>MEKLIILGAQWGDEGKGKIVDLLSEHFDITVRYQGGSNAGHTVVVNSQKFILHLLPTGILHEHVKGVIAQGMVVDLEVLHKEVKNLEEKGIYVKERLFISDRAHLVMPYHKLLDSLFEKKKGIGTTLRGIGPAYMFKYGRKGIRISDLKDEKRFYTLLEDNLDFVKNICEKVFCEKFDLDINQIYEEQLRYFEEFKENVVDLLRFFNTQKGSVLFEGAQGTLLDVDMGTYPYVTSSNASALGLSNGTGMPPKYFSDAFFLGVAKAYTTRVGEGPFPTELKGEEGEKLRELGGEYGSTTGRPRRCGWLDLVALKYAVQVNGLDGFVITKLDVLDTFDEVKVCVAYELDGEVIDYFPASYSELIRVKPVYKTLKGWKKSTKGAKDVSELPKEALDYVKFIEEYTGVPVVMLSTGPKRDEYIWLKEILRTRSGYS</sequence>
<comment type="function">
    <text evidence="1">Plays an important role in the de novo pathway of purine nucleotide biosynthesis. Catalyzes the first committed step in the biosynthesis of AMP from IMP.</text>
</comment>
<comment type="catalytic activity">
    <reaction evidence="1">
        <text>IMP + L-aspartate + GTP = N(6)-(1,2-dicarboxyethyl)-AMP + GDP + phosphate + 2 H(+)</text>
        <dbReference type="Rhea" id="RHEA:15753"/>
        <dbReference type="ChEBI" id="CHEBI:15378"/>
        <dbReference type="ChEBI" id="CHEBI:29991"/>
        <dbReference type="ChEBI" id="CHEBI:37565"/>
        <dbReference type="ChEBI" id="CHEBI:43474"/>
        <dbReference type="ChEBI" id="CHEBI:57567"/>
        <dbReference type="ChEBI" id="CHEBI:58053"/>
        <dbReference type="ChEBI" id="CHEBI:58189"/>
        <dbReference type="EC" id="6.3.4.4"/>
    </reaction>
</comment>
<comment type="cofactor">
    <cofactor evidence="1">
        <name>Mg(2+)</name>
        <dbReference type="ChEBI" id="CHEBI:18420"/>
    </cofactor>
    <text evidence="1">Binds 1 Mg(2+) ion per subunit.</text>
</comment>
<comment type="pathway">
    <text evidence="1">Purine metabolism; AMP biosynthesis via de novo pathway; AMP from IMP: step 1/2.</text>
</comment>
<comment type="subunit">
    <text evidence="1">Homodimer.</text>
</comment>
<comment type="subcellular location">
    <subcellularLocation>
        <location evidence="1">Cytoplasm</location>
    </subcellularLocation>
</comment>
<comment type="similarity">
    <text evidence="1">Belongs to the adenylosuccinate synthetase family.</text>
</comment>
<reference key="1">
    <citation type="journal article" date="1998" name="Nature">
        <title>The complete genome of the hyperthermophilic bacterium Aquifex aeolicus.</title>
        <authorList>
            <person name="Deckert G."/>
            <person name="Warren P.V."/>
            <person name="Gaasterland T."/>
            <person name="Young W.G."/>
            <person name="Lenox A.L."/>
            <person name="Graham D.E."/>
            <person name="Overbeek R."/>
            <person name="Snead M.A."/>
            <person name="Keller M."/>
            <person name="Aujay M."/>
            <person name="Huber R."/>
            <person name="Feldman R.A."/>
            <person name="Short J.M."/>
            <person name="Olsen G.J."/>
            <person name="Swanson R.V."/>
        </authorList>
    </citation>
    <scope>NUCLEOTIDE SEQUENCE [LARGE SCALE GENOMIC DNA]</scope>
    <source>
        <strain>VF5</strain>
    </source>
</reference>
<accession>O67321</accession>